<dbReference type="EMBL" id="AE000782">
    <property type="protein sequence ID" value="AAB90737.1"/>
    <property type="molecule type" value="Genomic_DNA"/>
</dbReference>
<dbReference type="PIR" id="D69312">
    <property type="entry name" value="D69312"/>
</dbReference>
<dbReference type="RefSeq" id="WP_010878007.1">
    <property type="nucleotide sequence ID" value="NC_000917.1"/>
</dbReference>
<dbReference type="SMR" id="O29750"/>
<dbReference type="STRING" id="224325.AF_0500"/>
<dbReference type="PaxDb" id="224325-AF_0500"/>
<dbReference type="EnsemblBacteria" id="AAB90737">
    <property type="protein sequence ID" value="AAB90737"/>
    <property type="gene ID" value="AF_0500"/>
</dbReference>
<dbReference type="GeneID" id="24794040"/>
<dbReference type="KEGG" id="afu:AF_0500"/>
<dbReference type="eggNOG" id="arCOG02025">
    <property type="taxonomic scope" value="Archaea"/>
</dbReference>
<dbReference type="HOGENOM" id="CLU_045348_3_1_2"/>
<dbReference type="OrthoDB" id="147508at2157"/>
<dbReference type="PhylomeDB" id="O29750"/>
<dbReference type="Proteomes" id="UP000002199">
    <property type="component" value="Chromosome"/>
</dbReference>
<dbReference type="GO" id="GO:0005886">
    <property type="term" value="C:plasma membrane"/>
    <property type="evidence" value="ECO:0007669"/>
    <property type="project" value="UniProtKB-SubCell"/>
</dbReference>
<dbReference type="GO" id="GO:0016491">
    <property type="term" value="F:oxidoreductase activity"/>
    <property type="evidence" value="ECO:0007669"/>
    <property type="project" value="UniProtKB-KW"/>
</dbReference>
<dbReference type="Gene3D" id="1.20.1630.10">
    <property type="entry name" value="Formate dehydrogenase/DMSO reductase domain"/>
    <property type="match status" value="1"/>
</dbReference>
<dbReference type="InterPro" id="IPR052049">
    <property type="entry name" value="Electron_transfer_protein"/>
</dbReference>
<dbReference type="InterPro" id="IPR005614">
    <property type="entry name" value="NrfD-like"/>
</dbReference>
<dbReference type="PANTHER" id="PTHR34856">
    <property type="entry name" value="PROTEIN NRFD"/>
    <property type="match status" value="1"/>
</dbReference>
<dbReference type="PANTHER" id="PTHR34856:SF2">
    <property type="entry name" value="PROTEIN NRFD"/>
    <property type="match status" value="1"/>
</dbReference>
<dbReference type="Pfam" id="PF03916">
    <property type="entry name" value="NrfD"/>
    <property type="match status" value="1"/>
</dbReference>
<gene>
    <name type="primary">hmeB</name>
    <name type="ordered locus">AF_0500</name>
</gene>
<name>HMEB_ARCFU</name>
<evidence type="ECO:0000255" key="1"/>
<evidence type="ECO:0000305" key="2"/>
<comment type="function">
    <text>Has menaquinol-oxidizing activity. HmeB subunit may function as a menaquinol-oxidizing site. HmeA, HmeB and HmeE subunits may together catalyze electron transfer from menaquinol to cytochrome c.</text>
</comment>
<comment type="subunit">
    <text>Consists of five subunits: an integral membrane subunit, a cytochrome b-like subunit, a cytochrome c subunit and two iron-sulfur subunits.</text>
</comment>
<comment type="subcellular location">
    <subcellularLocation>
        <location evidence="2">Cell membrane</location>
        <topology evidence="2">Multi-pass membrane protein</topology>
    </subcellularLocation>
</comment>
<comment type="similarity">
    <text evidence="2">Belongs to the NrfD family.</text>
</comment>
<protein>
    <recommendedName>
        <fullName>Hdr-like menaquinol oxidoreductase integral membrane subunit</fullName>
        <shortName>Hme subunit B</shortName>
    </recommendedName>
</protein>
<sequence>MAVEFKKIEGDSIQYFALVIILAAVTALGFYAYVLDHKMGLNGLSNRVPWGIVNAGIPYFIGLSAGSLIVSALAGVFNIKKYKVFSRIAAYMAAAWIIAAILSIALDIGKLYHFMNAVRYFNPTSIFSWNAFLYSSYFVICSIYLLVQFEEMEKATRFMAGLAVFWAVLVHSGTGAIYSFVYSKELYHSALTPPMFIVCAITSGLGLLLANLYFTFRFTKRELDPKLIRGLALIFAGLMMVLGYFLAVEGLEKGYIPALHEAVQFVFLTPTSGVFWSFWLLVIFGIAIPIIIVLNPKTGYDLRWITFAGILHAALVFAERFYLIIPGQVFPEEYLPGYELESLHTLEGYIVSYTPSVFEWLQVIGLIAMVYLIFVVGVKLFALIPERAVEEVVEE</sequence>
<organism>
    <name type="scientific">Archaeoglobus fulgidus (strain ATCC 49558 / DSM 4304 / JCM 9628 / NBRC 100126 / VC-16)</name>
    <dbReference type="NCBI Taxonomy" id="224325"/>
    <lineage>
        <taxon>Archaea</taxon>
        <taxon>Methanobacteriati</taxon>
        <taxon>Methanobacteriota</taxon>
        <taxon>Archaeoglobi</taxon>
        <taxon>Archaeoglobales</taxon>
        <taxon>Archaeoglobaceae</taxon>
        <taxon>Archaeoglobus</taxon>
    </lineage>
</organism>
<accession>O29750</accession>
<keyword id="KW-1003">Cell membrane</keyword>
<keyword id="KW-0249">Electron transport</keyword>
<keyword id="KW-0472">Membrane</keyword>
<keyword id="KW-0560">Oxidoreductase</keyword>
<keyword id="KW-1185">Reference proteome</keyword>
<keyword id="KW-0812">Transmembrane</keyword>
<keyword id="KW-1133">Transmembrane helix</keyword>
<keyword id="KW-0813">Transport</keyword>
<feature type="chain" id="PRO_0000159324" description="Hdr-like menaquinol oxidoreductase integral membrane subunit">
    <location>
        <begin position="1"/>
        <end position="395"/>
    </location>
</feature>
<feature type="transmembrane region" description="Helical" evidence="1">
    <location>
        <begin position="15"/>
        <end position="35"/>
    </location>
</feature>
<feature type="transmembrane region" description="Helical" evidence="1">
    <location>
        <begin position="57"/>
        <end position="77"/>
    </location>
</feature>
<feature type="transmembrane region" description="Helical" evidence="1">
    <location>
        <begin position="88"/>
        <end position="108"/>
    </location>
</feature>
<feature type="transmembrane region" description="Helical" evidence="1">
    <location>
        <begin position="126"/>
        <end position="146"/>
    </location>
</feature>
<feature type="transmembrane region" description="Helical" evidence="1">
    <location>
        <begin position="158"/>
        <end position="178"/>
    </location>
</feature>
<feature type="transmembrane region" description="Helical" evidence="1">
    <location>
        <begin position="196"/>
        <end position="216"/>
    </location>
</feature>
<feature type="transmembrane region" description="Helical" evidence="1">
    <location>
        <begin position="231"/>
        <end position="251"/>
    </location>
</feature>
<feature type="transmembrane region" description="Helical" evidence="1">
    <location>
        <begin position="274"/>
        <end position="294"/>
    </location>
</feature>
<feature type="transmembrane region" description="Helical" evidence="1">
    <location>
        <begin position="305"/>
        <end position="325"/>
    </location>
</feature>
<feature type="transmembrane region" description="Helical" evidence="1">
    <location>
        <begin position="364"/>
        <end position="384"/>
    </location>
</feature>
<proteinExistence type="inferred from homology"/>
<reference key="1">
    <citation type="journal article" date="1997" name="Nature">
        <title>The complete genome sequence of the hyperthermophilic, sulphate-reducing archaeon Archaeoglobus fulgidus.</title>
        <authorList>
            <person name="Klenk H.-P."/>
            <person name="Clayton R.A."/>
            <person name="Tomb J.-F."/>
            <person name="White O."/>
            <person name="Nelson K.E."/>
            <person name="Ketchum K.A."/>
            <person name="Dodson R.J."/>
            <person name="Gwinn M.L."/>
            <person name="Hickey E.K."/>
            <person name="Peterson J.D."/>
            <person name="Richardson D.L."/>
            <person name="Kerlavage A.R."/>
            <person name="Graham D.E."/>
            <person name="Kyrpides N.C."/>
            <person name="Fleischmann R.D."/>
            <person name="Quackenbush J."/>
            <person name="Lee N.H."/>
            <person name="Sutton G.G."/>
            <person name="Gill S.R."/>
            <person name="Kirkness E.F."/>
            <person name="Dougherty B.A."/>
            <person name="McKenney K."/>
            <person name="Adams M.D."/>
            <person name="Loftus B.J."/>
            <person name="Peterson S.N."/>
            <person name="Reich C.I."/>
            <person name="McNeil L.K."/>
            <person name="Badger J.H."/>
            <person name="Glodek A."/>
            <person name="Zhou L."/>
            <person name="Overbeek R."/>
            <person name="Gocayne J.D."/>
            <person name="Weidman J.F."/>
            <person name="McDonald L.A."/>
            <person name="Utterback T.R."/>
            <person name="Cotton M.D."/>
            <person name="Spriggs T."/>
            <person name="Artiach P."/>
            <person name="Kaine B.P."/>
            <person name="Sykes S.M."/>
            <person name="Sadow P.W."/>
            <person name="D'Andrea K.P."/>
            <person name="Bowman C."/>
            <person name="Fujii C."/>
            <person name="Garland S.A."/>
            <person name="Mason T.M."/>
            <person name="Olsen G.J."/>
            <person name="Fraser C.M."/>
            <person name="Smith H.O."/>
            <person name="Woese C.R."/>
            <person name="Venter J.C."/>
        </authorList>
    </citation>
    <scope>NUCLEOTIDE SEQUENCE [LARGE SCALE GENOMIC DNA]</scope>
    <source>
        <strain>ATCC 49558 / DSM 4304 / JCM 9628 / NBRC 100126 / VC-16</strain>
    </source>
</reference>
<reference key="2">
    <citation type="journal article" date="2002" name="Eur. J. Biochem.">
        <title>Purification and characterization of a membrane-bound enzyme complex from the sulfate-reducing archaeon Archaeoglobus fulgidus related to heterodisulfide reductase from methanogenic archaea.</title>
        <authorList>
            <person name="Mander G.J."/>
            <person name="Duin E.C."/>
            <person name="Linder D."/>
            <person name="Stetter K.O."/>
            <person name="Hedderich R."/>
        </authorList>
    </citation>
    <scope>DISCUSSION OF SEQUENCE</scope>
    <source>
        <strain>ATCC 49558 / DSM 4304 / JCM 9628 / NBRC 100126 / VC-16</strain>
    </source>
</reference>